<protein>
    <recommendedName>
        <fullName evidence="6">IscS-like cysteine desulfurase</fullName>
        <ecNumber evidence="5">2.8.1.7</ecNumber>
    </recommendedName>
</protein>
<gene>
    <name type="primary">iscS</name>
    <name type="ordered locus">Rv3025c</name>
</gene>
<organism>
    <name type="scientific">Mycobacterium tuberculosis (strain ATCC 25618 / H37Rv)</name>
    <dbReference type="NCBI Taxonomy" id="83332"/>
    <lineage>
        <taxon>Bacteria</taxon>
        <taxon>Bacillati</taxon>
        <taxon>Actinomycetota</taxon>
        <taxon>Actinomycetes</taxon>
        <taxon>Mycobacteriales</taxon>
        <taxon>Mycobacteriaceae</taxon>
        <taxon>Mycobacterium</taxon>
        <taxon>Mycobacterium tuberculosis complex</taxon>
    </lineage>
</organism>
<dbReference type="EC" id="2.8.1.7" evidence="5"/>
<dbReference type="EMBL" id="AL123456">
    <property type="protein sequence ID" value="CCP45833.1"/>
    <property type="molecule type" value="Genomic_DNA"/>
</dbReference>
<dbReference type="PIR" id="D70858">
    <property type="entry name" value="D70858"/>
</dbReference>
<dbReference type="RefSeq" id="NP_217541.1">
    <property type="nucleotide sequence ID" value="NC_000962.3"/>
</dbReference>
<dbReference type="RefSeq" id="WP_003415911.1">
    <property type="nucleotide sequence ID" value="NZ_NVQJ01000011.1"/>
</dbReference>
<dbReference type="PDB" id="4ISY">
    <property type="method" value="X-ray"/>
    <property type="resolution" value="2.59 A"/>
    <property type="chains" value="A/B/C/D=2-393"/>
</dbReference>
<dbReference type="PDBsum" id="4ISY"/>
<dbReference type="SMR" id="P9WQ71"/>
<dbReference type="FunCoup" id="P9WQ71">
    <property type="interactions" value="563"/>
</dbReference>
<dbReference type="STRING" id="83332.Rv3025c"/>
<dbReference type="PaxDb" id="83332-Rv3025c"/>
<dbReference type="GeneID" id="887677"/>
<dbReference type="KEGG" id="mtu:Rv3025c"/>
<dbReference type="KEGG" id="mtv:RVBD_3025c"/>
<dbReference type="TubercuList" id="Rv3025c"/>
<dbReference type="eggNOG" id="COG1104">
    <property type="taxonomic scope" value="Bacteria"/>
</dbReference>
<dbReference type="InParanoid" id="P9WQ71"/>
<dbReference type="OrthoDB" id="9808002at2"/>
<dbReference type="PhylomeDB" id="P9WQ71"/>
<dbReference type="SABIO-RK" id="P9WQ71"/>
<dbReference type="EvolutionaryTrace" id="P9WQ71"/>
<dbReference type="Proteomes" id="UP000001584">
    <property type="component" value="Chromosome"/>
</dbReference>
<dbReference type="GO" id="GO:0031071">
    <property type="term" value="F:cysteine desulfurase activity"/>
    <property type="evidence" value="ECO:0000314"/>
    <property type="project" value="MTBBASE"/>
</dbReference>
<dbReference type="GO" id="GO:0051536">
    <property type="term" value="F:iron-sulfur cluster binding"/>
    <property type="evidence" value="ECO:0007669"/>
    <property type="project" value="UniProtKB-KW"/>
</dbReference>
<dbReference type="GO" id="GO:0046872">
    <property type="term" value="F:metal ion binding"/>
    <property type="evidence" value="ECO:0007669"/>
    <property type="project" value="UniProtKB-KW"/>
</dbReference>
<dbReference type="GO" id="GO:0008483">
    <property type="term" value="F:transaminase activity"/>
    <property type="evidence" value="ECO:0007669"/>
    <property type="project" value="UniProtKB-KW"/>
</dbReference>
<dbReference type="GO" id="GO:0016226">
    <property type="term" value="P:iron-sulfur cluster assembly"/>
    <property type="evidence" value="ECO:0000314"/>
    <property type="project" value="MTBBASE"/>
</dbReference>
<dbReference type="FunFam" id="3.90.1150.10:FF:000053">
    <property type="entry name" value="Cysteine desulfurase NifS"/>
    <property type="match status" value="1"/>
</dbReference>
<dbReference type="FunFam" id="3.40.640.10:FF:000084">
    <property type="entry name" value="IscS-like cysteine desulfurase"/>
    <property type="match status" value="1"/>
</dbReference>
<dbReference type="Gene3D" id="1.10.260.50">
    <property type="match status" value="1"/>
</dbReference>
<dbReference type="Gene3D" id="3.90.1150.10">
    <property type="entry name" value="Aspartate Aminotransferase, domain 1"/>
    <property type="match status" value="1"/>
</dbReference>
<dbReference type="Gene3D" id="3.40.640.10">
    <property type="entry name" value="Type I PLP-dependent aspartate aminotransferase-like (Major domain)"/>
    <property type="match status" value="1"/>
</dbReference>
<dbReference type="InterPro" id="IPR000192">
    <property type="entry name" value="Aminotrans_V_dom"/>
</dbReference>
<dbReference type="InterPro" id="IPR016454">
    <property type="entry name" value="Cysteine_dSase"/>
</dbReference>
<dbReference type="InterPro" id="IPR015424">
    <property type="entry name" value="PyrdxlP-dep_Trfase"/>
</dbReference>
<dbReference type="InterPro" id="IPR015421">
    <property type="entry name" value="PyrdxlP-dep_Trfase_major"/>
</dbReference>
<dbReference type="InterPro" id="IPR015422">
    <property type="entry name" value="PyrdxlP-dep_Trfase_small"/>
</dbReference>
<dbReference type="PANTHER" id="PTHR11601:SF34">
    <property type="entry name" value="CYSTEINE DESULFURASE"/>
    <property type="match status" value="1"/>
</dbReference>
<dbReference type="PANTHER" id="PTHR11601">
    <property type="entry name" value="CYSTEINE DESULFURYLASE FAMILY MEMBER"/>
    <property type="match status" value="1"/>
</dbReference>
<dbReference type="Pfam" id="PF00266">
    <property type="entry name" value="Aminotran_5"/>
    <property type="match status" value="1"/>
</dbReference>
<dbReference type="PIRSF" id="PIRSF005572">
    <property type="entry name" value="NifS"/>
    <property type="match status" value="1"/>
</dbReference>
<dbReference type="SUPFAM" id="SSF53383">
    <property type="entry name" value="PLP-dependent transferases"/>
    <property type="match status" value="1"/>
</dbReference>
<proteinExistence type="evidence at protein level"/>
<name>ISCSL_MYCTU</name>
<feature type="chain" id="PRO_0000420404" description="IscS-like cysteine desulfurase">
    <location>
        <begin position="1"/>
        <end position="393"/>
    </location>
</feature>
<feature type="active site" description="Cysteine persulfide intermediate" evidence="2 8">
    <location>
        <position position="329"/>
    </location>
</feature>
<feature type="binding site" evidence="3">
    <location>
        <begin position="68"/>
        <end position="69"/>
    </location>
    <ligand>
        <name>pyridoxal 5'-phosphate</name>
        <dbReference type="ChEBI" id="CHEBI:597326"/>
    </ligand>
</feature>
<feature type="binding site" evidence="1">
    <location>
        <position position="154"/>
    </location>
    <ligand>
        <name>pyridoxal 5'-phosphate</name>
        <dbReference type="ChEBI" id="CHEBI:597326"/>
    </ligand>
</feature>
<feature type="binding site" evidence="3">
    <location>
        <position position="182"/>
    </location>
    <ligand>
        <name>pyridoxal 5'-phosphate</name>
        <dbReference type="ChEBI" id="CHEBI:597326"/>
    </ligand>
</feature>
<feature type="binding site" evidence="3">
    <location>
        <begin position="202"/>
        <end position="204"/>
    </location>
    <ligand>
        <name>pyridoxal 5'-phosphate</name>
        <dbReference type="ChEBI" id="CHEBI:597326"/>
    </ligand>
</feature>
<feature type="binding site" evidence="3">
    <location>
        <position position="240"/>
    </location>
    <ligand>
        <name>pyridoxal 5'-phosphate</name>
        <dbReference type="ChEBI" id="CHEBI:597326"/>
    </ligand>
</feature>
<feature type="binding site" description="via persulfide group" evidence="1">
    <location>
        <position position="329"/>
    </location>
    <ligand>
        <name>[2Fe-2S] cluster</name>
        <dbReference type="ChEBI" id="CHEBI:190135"/>
    </ligand>
</feature>
<feature type="modified residue" description="N6-(pyridoxal phosphate)lysine" evidence="3 8">
    <location>
        <position position="205"/>
    </location>
</feature>
<feature type="turn" evidence="9">
    <location>
        <begin position="6"/>
        <end position="8"/>
    </location>
</feature>
<feature type="helix" evidence="9">
    <location>
        <begin position="14"/>
        <end position="24"/>
    </location>
</feature>
<feature type="helix" evidence="9">
    <location>
        <begin position="35"/>
        <end position="54"/>
    </location>
</feature>
<feature type="helix" evidence="9">
    <location>
        <begin position="59"/>
        <end position="61"/>
    </location>
</feature>
<feature type="strand" evidence="9">
    <location>
        <begin position="62"/>
        <end position="67"/>
    </location>
</feature>
<feature type="helix" evidence="9">
    <location>
        <begin position="68"/>
        <end position="86"/>
    </location>
</feature>
<feature type="strand" evidence="9">
    <location>
        <begin position="92"/>
        <end position="96"/>
    </location>
</feature>
<feature type="helix" evidence="9">
    <location>
        <begin position="101"/>
        <end position="114"/>
    </location>
</feature>
<feature type="strand" evidence="9">
    <location>
        <begin position="117"/>
        <end position="121"/>
    </location>
</feature>
<feature type="helix" evidence="9">
    <location>
        <begin position="131"/>
        <end position="139"/>
    </location>
</feature>
<feature type="strand" evidence="9">
    <location>
        <begin position="144"/>
        <end position="148"/>
    </location>
</feature>
<feature type="turn" evidence="9">
    <location>
        <begin position="154"/>
        <end position="156"/>
    </location>
</feature>
<feature type="helix" evidence="9">
    <location>
        <begin position="162"/>
        <end position="171"/>
    </location>
</feature>
<feature type="strand" evidence="9">
    <location>
        <begin position="176"/>
        <end position="179"/>
    </location>
</feature>
<feature type="turn" evidence="9">
    <location>
        <begin position="181"/>
        <end position="186"/>
    </location>
</feature>
<feature type="turn" evidence="9">
    <location>
        <begin position="191"/>
        <end position="193"/>
    </location>
</feature>
<feature type="strand" evidence="9">
    <location>
        <begin position="197"/>
        <end position="202"/>
    </location>
</feature>
<feature type="strand" evidence="9">
    <location>
        <begin position="213"/>
        <end position="217"/>
    </location>
</feature>
<feature type="turn" evidence="9">
    <location>
        <begin position="234"/>
        <end position="236"/>
    </location>
</feature>
<feature type="helix" evidence="9">
    <location>
        <begin position="243"/>
        <end position="258"/>
    </location>
</feature>
<feature type="helix" evidence="9">
    <location>
        <begin position="260"/>
        <end position="281"/>
    </location>
</feature>
<feature type="strand" evidence="9">
    <location>
        <begin position="283"/>
        <end position="287"/>
    </location>
</feature>
<feature type="strand" evidence="9">
    <location>
        <begin position="299"/>
        <end position="304"/>
    </location>
</feature>
<feature type="helix" evidence="9">
    <location>
        <begin position="309"/>
        <end position="318"/>
    </location>
</feature>
<feature type="helix" evidence="9">
    <location>
        <begin position="338"/>
        <end position="342"/>
    </location>
</feature>
<feature type="helix" evidence="9">
    <location>
        <begin position="347"/>
        <end position="350"/>
    </location>
</feature>
<feature type="strand" evidence="9">
    <location>
        <begin position="353"/>
        <end position="357"/>
    </location>
</feature>
<feature type="helix" evidence="9">
    <location>
        <begin position="364"/>
        <end position="385"/>
    </location>
</feature>
<evidence type="ECO:0000250" key="1">
    <source>
        <dbReference type="UniProtKB" id="O29689"/>
    </source>
</evidence>
<evidence type="ECO:0000250" key="2">
    <source>
        <dbReference type="UniProtKB" id="P0A6B7"/>
    </source>
</evidence>
<evidence type="ECO:0000250" key="3">
    <source>
        <dbReference type="UniProtKB" id="P0A6B9"/>
    </source>
</evidence>
<evidence type="ECO:0000269" key="4">
    <source>
    </source>
</evidence>
<evidence type="ECO:0000269" key="5">
    <source>
    </source>
</evidence>
<evidence type="ECO:0000303" key="6">
    <source>
    </source>
</evidence>
<evidence type="ECO:0000305" key="7"/>
<evidence type="ECO:0000305" key="8">
    <source>
    </source>
</evidence>
<evidence type="ECO:0007829" key="9">
    <source>
        <dbReference type="PDB" id="4ISY"/>
    </source>
</evidence>
<keyword id="KW-0002">3D-structure</keyword>
<keyword id="KW-0032">Aminotransferase</keyword>
<keyword id="KW-0408">Iron</keyword>
<keyword id="KW-0411">Iron-sulfur</keyword>
<keyword id="KW-0479">Metal-binding</keyword>
<keyword id="KW-0663">Pyridoxal phosphate</keyword>
<keyword id="KW-1185">Reference proteome</keyword>
<keyword id="KW-0808">Transferase</keyword>
<accession>P9WQ71</accession>
<accession>F2GP44</accession>
<accession>L0TE93</accession>
<accession>O53272</accession>
<accession>Q7D698</accession>
<reference key="1">
    <citation type="journal article" date="1998" name="Nature">
        <title>Deciphering the biology of Mycobacterium tuberculosis from the complete genome sequence.</title>
        <authorList>
            <person name="Cole S.T."/>
            <person name="Brosch R."/>
            <person name="Parkhill J."/>
            <person name="Garnier T."/>
            <person name="Churcher C.M."/>
            <person name="Harris D.E."/>
            <person name="Gordon S.V."/>
            <person name="Eiglmeier K."/>
            <person name="Gas S."/>
            <person name="Barry C.E. III"/>
            <person name="Tekaia F."/>
            <person name="Badcock K."/>
            <person name="Basham D."/>
            <person name="Brown D."/>
            <person name="Chillingworth T."/>
            <person name="Connor R."/>
            <person name="Davies R.M."/>
            <person name="Devlin K."/>
            <person name="Feltwell T."/>
            <person name="Gentles S."/>
            <person name="Hamlin N."/>
            <person name="Holroyd S."/>
            <person name="Hornsby T."/>
            <person name="Jagels K."/>
            <person name="Krogh A."/>
            <person name="McLean J."/>
            <person name="Moule S."/>
            <person name="Murphy L.D."/>
            <person name="Oliver S."/>
            <person name="Osborne J."/>
            <person name="Quail M.A."/>
            <person name="Rajandream M.A."/>
            <person name="Rogers J."/>
            <person name="Rutter S."/>
            <person name="Seeger K."/>
            <person name="Skelton S."/>
            <person name="Squares S."/>
            <person name="Squares R."/>
            <person name="Sulston J.E."/>
            <person name="Taylor K."/>
            <person name="Whitehead S."/>
            <person name="Barrell B.G."/>
        </authorList>
    </citation>
    <scope>NUCLEOTIDE SEQUENCE [LARGE SCALE GENOMIC DNA]</scope>
    <source>
        <strain>ATCC 25618 / H37Rv</strain>
    </source>
</reference>
<reference key="2">
    <citation type="journal article" date="2007" name="Proc. Natl. Acad. Sci. U.S.A.">
        <title>Mycobacterium tuberculosis WhiB3 responds to O2 and nitric oxide via its [4Fe-4S] cluster and is essential for nutrient starvation survival.</title>
        <authorList>
            <person name="Singh A."/>
            <person name="Guidry L."/>
            <person name="Narasimhulu K.V."/>
            <person name="Mai D."/>
            <person name="Trombley J."/>
            <person name="Redding K.E."/>
            <person name="Giles G.I."/>
            <person name="Lancaster J.R. Jr."/>
            <person name="Steyn A.J."/>
        </authorList>
    </citation>
    <scope>FUNCTION AS A CYSTEINE DESULFURASE</scope>
    <source>
        <strain>ATCC 25618 / H37Rv</strain>
    </source>
</reference>
<reference key="3">
    <citation type="journal article" date="2011" name="Mol. Cell. Proteomics">
        <title>Proteogenomic analysis of Mycobacterium tuberculosis by high resolution mass spectrometry.</title>
        <authorList>
            <person name="Kelkar D.S."/>
            <person name="Kumar D."/>
            <person name="Kumar P."/>
            <person name="Balakrishnan L."/>
            <person name="Muthusamy B."/>
            <person name="Yadav A.K."/>
            <person name="Shrivastava P."/>
            <person name="Marimuthu A."/>
            <person name="Anand S."/>
            <person name="Sundaram H."/>
            <person name="Kingsbury R."/>
            <person name="Harsha H.C."/>
            <person name="Nair B."/>
            <person name="Prasad T.S."/>
            <person name="Chauhan D.S."/>
            <person name="Katoch K."/>
            <person name="Katoch V.M."/>
            <person name="Kumar P."/>
            <person name="Chaerkady R."/>
            <person name="Ramachandran S."/>
            <person name="Dash D."/>
            <person name="Pandey A."/>
        </authorList>
    </citation>
    <scope>IDENTIFICATION BY MASS SPECTROMETRY [LARGE SCALE ANALYSIS]</scope>
    <source>
        <strain>ATCC 25618 / H37Rv</strain>
    </source>
</reference>
<reference key="4">
    <citation type="journal article" date="2014" name="Biochem. J.">
        <title>The cysteine desulfurase IscS of Mycobacterium tuberculosis is involved in iron-sulfur cluster biogenesis and oxidative stress defence.</title>
        <authorList>
            <person name="Rybniker J."/>
            <person name="Pojer F."/>
            <person name="Marienhagen J."/>
            <person name="Kolly G.S."/>
            <person name="Chen J.M."/>
            <person name="van Gumpel E."/>
            <person name="Hartmann P."/>
            <person name="Cole S.T."/>
        </authorList>
    </citation>
    <scope>X-RAY CRYSTALLOGRAPHY (2.59 ANGSTROMS) OF 2-393</scope>
    <scope>FUNCTION</scope>
    <scope>CATALYTIC ACTIVITY</scope>
    <scope>BIOPHYSICOCHEMICAL PROPERTIES</scope>
    <scope>DISRUPTION PHENOTYPE</scope>
    <scope>SUBUNIT</scope>
    <scope>SUBSTRATE SPECIFICITY</scope>
    <source>
        <strain>ATCC 25618 / H37Rv</strain>
    </source>
</reference>
<comment type="function">
    <text evidence="4 5">Catalyzes the removal of elemental sulfur from cysteine to produce alanine (Probable). Participates in the biosynthesis of metalloclusters by providing the inorganic sulfur required for Fe-S core formation. One acceptor is Whib3, on which this enzyme assembles a 4Fe-4S cluster. It can use both L-cysteine and L-selenocysteine as substrates.</text>
</comment>
<comment type="catalytic activity">
    <reaction evidence="5">
        <text>(sulfur carrier)-H + L-cysteine = (sulfur carrier)-SH + L-alanine</text>
        <dbReference type="Rhea" id="RHEA:43892"/>
        <dbReference type="Rhea" id="RHEA-COMP:14737"/>
        <dbReference type="Rhea" id="RHEA-COMP:14739"/>
        <dbReference type="ChEBI" id="CHEBI:29917"/>
        <dbReference type="ChEBI" id="CHEBI:35235"/>
        <dbReference type="ChEBI" id="CHEBI:57972"/>
        <dbReference type="ChEBI" id="CHEBI:64428"/>
        <dbReference type="EC" id="2.8.1.7"/>
    </reaction>
</comment>
<comment type="cofactor">
    <cofactor evidence="3 8">
        <name>pyridoxal 5'-phosphate</name>
        <dbReference type="ChEBI" id="CHEBI:597326"/>
    </cofactor>
</comment>
<comment type="biophysicochemical properties">
    <kinetics>
        <KM evidence="5">6.1 mM for L-cysteine (at pH 7.5 and 37 degrees Celsius)</KM>
    </kinetics>
</comment>
<comment type="subunit">
    <text evidence="5">Homodimer. It interacts with Whib3, Acn, SdhB, FdhF and SirA, other S acceptors.</text>
</comment>
<comment type="disruption phenotype">
    <text evidence="5">Cells lacking this gene are microaerophilic and hypersensitive to oxidative stress. Moreover, they show impaired Fe-S cluster-dependent enzyme activity.</text>
</comment>
<comment type="miscellaneous">
    <text evidence="5">IscU is absent from the mycobacterial ISC operon.</text>
</comment>
<comment type="similarity">
    <text evidence="7">Belongs to the class-V pyridoxal-phosphate-dependent aminotransferase family. NifS/IscS subfamily.</text>
</comment>
<sequence length="393" mass="40947">MAYLDHAATTPMHPAAIEAMAAVQRTIGNASSLHTSGRSARRRIEEARELIADKLGARPSEVIFTAGGTESDNLAVKGIYWARRDAEPHRRRIVTTEVEHHAVLDSVNWLVEHEGAHVTWLPTAADGSVSATALREALQSHDDVALVSVMWANNEVGTILPIAEMSVVAMEFGVPMHSDAIQAVGQLPLDFGASGLSAMSVAGHKFGGPPGVGALLLRRDVTCVPLMHGGGQERDIRSGTPDVASAVGMATAAQIAVDGLEENSARLRLLRDRLVEGVLAEIDDVCLNGADDPMRLAGNAHFTFRGCEGDALLMLLDANGIECSTGSACTAGVAQPSHVLIAMGVDAASARGSLRLSLGHTSVEADVDAALEVLPGAVARARRAALAAAGASR</sequence>